<keyword id="KW-1185">Reference proteome</keyword>
<keyword id="KW-0687">Ribonucleoprotein</keyword>
<keyword id="KW-0689">Ribosomal protein</keyword>
<protein>
    <recommendedName>
        <fullName evidence="1">Large ribosomal subunit protein bL31B</fullName>
    </recommendedName>
    <alternativeName>
        <fullName evidence="2">50S ribosomal protein L31 type B</fullName>
    </alternativeName>
</protein>
<accession>A5VI29</accession>
<comment type="subunit">
    <text evidence="1">Part of the 50S ribosomal subunit.</text>
</comment>
<comment type="similarity">
    <text evidence="1">Belongs to the bacterial ribosomal protein bL31 family. Type B subfamily.</text>
</comment>
<feature type="chain" id="PRO_1000060499" description="Large ribosomal subunit protein bL31B">
    <location>
        <begin position="1"/>
        <end position="81"/>
    </location>
</feature>
<reference key="1">
    <citation type="journal article" date="2011" name="PLoS Genet.">
        <title>The evolution of host specialization in the vertebrate gut symbiont Lactobacillus reuteri.</title>
        <authorList>
            <person name="Frese S.A."/>
            <person name="Benson A.K."/>
            <person name="Tannock G.W."/>
            <person name="Loach D.M."/>
            <person name="Kim J."/>
            <person name="Zhang M."/>
            <person name="Oh P.L."/>
            <person name="Heng N.C."/>
            <person name="Patil P.B."/>
            <person name="Juge N."/>
            <person name="Mackenzie D.A."/>
            <person name="Pearson B.M."/>
            <person name="Lapidus A."/>
            <person name="Dalin E."/>
            <person name="Tice H."/>
            <person name="Goltsman E."/>
            <person name="Land M."/>
            <person name="Hauser L."/>
            <person name="Ivanova N."/>
            <person name="Kyrpides N.C."/>
            <person name="Walter J."/>
        </authorList>
    </citation>
    <scope>NUCLEOTIDE SEQUENCE [LARGE SCALE GENOMIC DNA]</scope>
    <source>
        <strain>DSM 20016</strain>
    </source>
</reference>
<proteinExistence type="inferred from homology"/>
<evidence type="ECO:0000255" key="1">
    <source>
        <dbReference type="HAMAP-Rule" id="MF_00502"/>
    </source>
</evidence>
<evidence type="ECO:0000305" key="2"/>
<gene>
    <name evidence="1" type="primary">rpmE2</name>
    <name type="ordered locus">Lreu_0233</name>
</gene>
<sequence length="81" mass="9123">MKQGIHPDYHPVVFEDSSTGYKFLSGSTATSSETVKWEDGNEYPLIRVEVTSDSHPFYTGKQKFTQADGAVDKFNKKYGLK</sequence>
<organism>
    <name type="scientific">Limosilactobacillus reuteri (strain DSM 20016)</name>
    <name type="common">Lactobacillus reuteri</name>
    <dbReference type="NCBI Taxonomy" id="557436"/>
    <lineage>
        <taxon>Bacteria</taxon>
        <taxon>Bacillati</taxon>
        <taxon>Bacillota</taxon>
        <taxon>Bacilli</taxon>
        <taxon>Lactobacillales</taxon>
        <taxon>Lactobacillaceae</taxon>
        <taxon>Limosilactobacillus</taxon>
    </lineage>
</organism>
<name>RL31B_LIMRD</name>
<dbReference type="EMBL" id="CP000705">
    <property type="protein sequence ID" value="ABQ82503.1"/>
    <property type="molecule type" value="Genomic_DNA"/>
</dbReference>
<dbReference type="RefSeq" id="WP_003665599.1">
    <property type="nucleotide sequence ID" value="NZ_AZDD01000038.1"/>
</dbReference>
<dbReference type="SMR" id="A5VI29"/>
<dbReference type="STRING" id="557436.Lreu_0233"/>
<dbReference type="KEGG" id="lre:Lreu_0233"/>
<dbReference type="PATRIC" id="fig|557436.17.peg.1296"/>
<dbReference type="eggNOG" id="COG0254">
    <property type="taxonomic scope" value="Bacteria"/>
</dbReference>
<dbReference type="HOGENOM" id="CLU_114306_2_2_9"/>
<dbReference type="Proteomes" id="UP000001991">
    <property type="component" value="Chromosome"/>
</dbReference>
<dbReference type="GO" id="GO:1990904">
    <property type="term" value="C:ribonucleoprotein complex"/>
    <property type="evidence" value="ECO:0007669"/>
    <property type="project" value="UniProtKB-KW"/>
</dbReference>
<dbReference type="GO" id="GO:0005840">
    <property type="term" value="C:ribosome"/>
    <property type="evidence" value="ECO:0007669"/>
    <property type="project" value="UniProtKB-KW"/>
</dbReference>
<dbReference type="GO" id="GO:0003735">
    <property type="term" value="F:structural constituent of ribosome"/>
    <property type="evidence" value="ECO:0007669"/>
    <property type="project" value="InterPro"/>
</dbReference>
<dbReference type="GO" id="GO:0006412">
    <property type="term" value="P:translation"/>
    <property type="evidence" value="ECO:0007669"/>
    <property type="project" value="UniProtKB-UniRule"/>
</dbReference>
<dbReference type="Gene3D" id="4.10.830.30">
    <property type="entry name" value="Ribosomal protein L31"/>
    <property type="match status" value="1"/>
</dbReference>
<dbReference type="HAMAP" id="MF_00502">
    <property type="entry name" value="Ribosomal_bL31_2"/>
    <property type="match status" value="1"/>
</dbReference>
<dbReference type="InterPro" id="IPR034704">
    <property type="entry name" value="Ribosomal_bL28/bL31-like_sf"/>
</dbReference>
<dbReference type="InterPro" id="IPR002150">
    <property type="entry name" value="Ribosomal_bL31"/>
</dbReference>
<dbReference type="InterPro" id="IPR027493">
    <property type="entry name" value="Ribosomal_bL31_B"/>
</dbReference>
<dbReference type="InterPro" id="IPR042105">
    <property type="entry name" value="Ribosomal_bL31_sf"/>
</dbReference>
<dbReference type="NCBIfam" id="TIGR00105">
    <property type="entry name" value="L31"/>
    <property type="match status" value="1"/>
</dbReference>
<dbReference type="NCBIfam" id="NF002462">
    <property type="entry name" value="PRK01678.1"/>
    <property type="match status" value="1"/>
</dbReference>
<dbReference type="PANTHER" id="PTHR33280">
    <property type="entry name" value="50S RIBOSOMAL PROTEIN L31, CHLOROPLASTIC"/>
    <property type="match status" value="1"/>
</dbReference>
<dbReference type="PANTHER" id="PTHR33280:SF1">
    <property type="entry name" value="LARGE RIBOSOMAL SUBUNIT PROTEIN BL31C"/>
    <property type="match status" value="1"/>
</dbReference>
<dbReference type="Pfam" id="PF01197">
    <property type="entry name" value="Ribosomal_L31"/>
    <property type="match status" value="1"/>
</dbReference>
<dbReference type="PRINTS" id="PR01249">
    <property type="entry name" value="RIBOSOMALL31"/>
</dbReference>
<dbReference type="SUPFAM" id="SSF143800">
    <property type="entry name" value="L28p-like"/>
    <property type="match status" value="1"/>
</dbReference>